<reference key="1">
    <citation type="submission" date="2007-10" db="EMBL/GenBank/DDBJ databases">
        <title>Genome sequence of Campylobacter concisus 13826 isolated from human feces.</title>
        <authorList>
            <person name="Fouts D.E."/>
            <person name="Mongodin E.F."/>
            <person name="Puiu D."/>
            <person name="Sebastian Y."/>
            <person name="Miller W.G."/>
            <person name="Mandrell R.E."/>
            <person name="On S."/>
            <person name="Nelson K.E."/>
        </authorList>
    </citation>
    <scope>NUCLEOTIDE SEQUENCE [LARGE SCALE GENOMIC DNA]</scope>
    <source>
        <strain>13826</strain>
    </source>
</reference>
<gene>
    <name evidence="1" type="primary">rpoZ</name>
    <name type="ordered locus">Ccon26_14940</name>
    <name type="ORF">CCC13826_0501</name>
</gene>
<sequence>MRTEQITARALKQVGDDRYKLSLIVAKRAEALANGAIALVDADTSKMKFADIALLEVAEGKIGLEAIVEGK</sequence>
<organism>
    <name type="scientific">Campylobacter concisus (strain 13826)</name>
    <dbReference type="NCBI Taxonomy" id="360104"/>
    <lineage>
        <taxon>Bacteria</taxon>
        <taxon>Pseudomonadati</taxon>
        <taxon>Campylobacterota</taxon>
        <taxon>Epsilonproteobacteria</taxon>
        <taxon>Campylobacterales</taxon>
        <taxon>Campylobacteraceae</taxon>
        <taxon>Campylobacter</taxon>
    </lineage>
</organism>
<name>RPOZ_CAMC1</name>
<dbReference type="EC" id="2.7.7.6" evidence="1"/>
<dbReference type="EMBL" id="CP000792">
    <property type="protein sequence ID" value="EAT99250.1"/>
    <property type="molecule type" value="Genomic_DNA"/>
</dbReference>
<dbReference type="RefSeq" id="WP_004317259.1">
    <property type="nucleotide sequence ID" value="NC_009802.2"/>
</dbReference>
<dbReference type="SMR" id="A7ZEY3"/>
<dbReference type="STRING" id="360104.CCC13826_0501"/>
<dbReference type="KEGG" id="cco:CCC13826_0501"/>
<dbReference type="eggNOG" id="COG1758">
    <property type="taxonomic scope" value="Bacteria"/>
</dbReference>
<dbReference type="HOGENOM" id="CLU_125406_3_0_7"/>
<dbReference type="OrthoDB" id="5334728at2"/>
<dbReference type="Proteomes" id="UP000001121">
    <property type="component" value="Chromosome"/>
</dbReference>
<dbReference type="GO" id="GO:0000428">
    <property type="term" value="C:DNA-directed RNA polymerase complex"/>
    <property type="evidence" value="ECO:0007669"/>
    <property type="project" value="UniProtKB-KW"/>
</dbReference>
<dbReference type="GO" id="GO:0003677">
    <property type="term" value="F:DNA binding"/>
    <property type="evidence" value="ECO:0007669"/>
    <property type="project" value="UniProtKB-UniRule"/>
</dbReference>
<dbReference type="GO" id="GO:0003899">
    <property type="term" value="F:DNA-directed RNA polymerase activity"/>
    <property type="evidence" value="ECO:0007669"/>
    <property type="project" value="UniProtKB-UniRule"/>
</dbReference>
<dbReference type="GO" id="GO:0006351">
    <property type="term" value="P:DNA-templated transcription"/>
    <property type="evidence" value="ECO:0007669"/>
    <property type="project" value="UniProtKB-UniRule"/>
</dbReference>
<dbReference type="Gene3D" id="3.90.940.10">
    <property type="match status" value="1"/>
</dbReference>
<dbReference type="HAMAP" id="MF_00366">
    <property type="entry name" value="RNApol_bact_RpoZ"/>
    <property type="match status" value="1"/>
</dbReference>
<dbReference type="InterPro" id="IPR003716">
    <property type="entry name" value="DNA-dir_RNA_pol_omega"/>
</dbReference>
<dbReference type="InterPro" id="IPR006110">
    <property type="entry name" value="Pol_omega/Rpo6/RPB6"/>
</dbReference>
<dbReference type="InterPro" id="IPR036161">
    <property type="entry name" value="RPB6/omega-like_sf"/>
</dbReference>
<dbReference type="NCBIfam" id="NF001579">
    <property type="entry name" value="PRK00392.6-2"/>
    <property type="match status" value="1"/>
</dbReference>
<dbReference type="Pfam" id="PF01192">
    <property type="entry name" value="RNA_pol_Rpb6"/>
    <property type="match status" value="1"/>
</dbReference>
<dbReference type="SMART" id="SM01409">
    <property type="entry name" value="RNA_pol_Rpb6"/>
    <property type="match status" value="1"/>
</dbReference>
<dbReference type="SUPFAM" id="SSF63562">
    <property type="entry name" value="RPB6/omega subunit-like"/>
    <property type="match status" value="1"/>
</dbReference>
<proteinExistence type="inferred from homology"/>
<keyword id="KW-0240">DNA-directed RNA polymerase</keyword>
<keyword id="KW-0548">Nucleotidyltransferase</keyword>
<keyword id="KW-0804">Transcription</keyword>
<keyword id="KW-0808">Transferase</keyword>
<protein>
    <recommendedName>
        <fullName evidence="1">DNA-directed RNA polymerase subunit omega</fullName>
        <shortName evidence="1">RNAP omega subunit</shortName>
        <ecNumber evidence="1">2.7.7.6</ecNumber>
    </recommendedName>
    <alternativeName>
        <fullName evidence="1">RNA polymerase omega subunit</fullName>
    </alternativeName>
    <alternativeName>
        <fullName evidence="1">Transcriptase subunit omega</fullName>
    </alternativeName>
</protein>
<accession>A7ZEY3</accession>
<evidence type="ECO:0000255" key="1">
    <source>
        <dbReference type="HAMAP-Rule" id="MF_00366"/>
    </source>
</evidence>
<feature type="chain" id="PRO_1000079618" description="DNA-directed RNA polymerase subunit omega">
    <location>
        <begin position="1"/>
        <end position="71"/>
    </location>
</feature>
<comment type="function">
    <text evidence="1">Promotes RNA polymerase assembly. Latches the N- and C-terminal regions of the beta' subunit thereby facilitating its interaction with the beta and alpha subunits.</text>
</comment>
<comment type="catalytic activity">
    <reaction evidence="1">
        <text>RNA(n) + a ribonucleoside 5'-triphosphate = RNA(n+1) + diphosphate</text>
        <dbReference type="Rhea" id="RHEA:21248"/>
        <dbReference type="Rhea" id="RHEA-COMP:14527"/>
        <dbReference type="Rhea" id="RHEA-COMP:17342"/>
        <dbReference type="ChEBI" id="CHEBI:33019"/>
        <dbReference type="ChEBI" id="CHEBI:61557"/>
        <dbReference type="ChEBI" id="CHEBI:140395"/>
        <dbReference type="EC" id="2.7.7.6"/>
    </reaction>
</comment>
<comment type="subunit">
    <text evidence="1">The RNAP catalytic core consists of 2 alpha, 1 beta, 1 beta' and 1 omega subunit. When a sigma factor is associated with the core the holoenzyme is formed, which can initiate transcription.</text>
</comment>
<comment type="similarity">
    <text evidence="1">Belongs to the RNA polymerase subunit omega family.</text>
</comment>